<dbReference type="EMBL" id="AB168505">
    <property type="protein sequence ID" value="BAE00625.1"/>
    <property type="molecule type" value="mRNA"/>
</dbReference>
<dbReference type="RefSeq" id="NP_001270824.1">
    <property type="nucleotide sequence ID" value="NM_001283895.1"/>
</dbReference>
<dbReference type="SMR" id="Q4R8E7"/>
<dbReference type="STRING" id="9541.ENSMFAP00000014157"/>
<dbReference type="eggNOG" id="KOG0272">
    <property type="taxonomic scope" value="Eukaryota"/>
</dbReference>
<dbReference type="Proteomes" id="UP000233100">
    <property type="component" value="Unplaced"/>
</dbReference>
<dbReference type="GO" id="GO:0036064">
    <property type="term" value="C:ciliary basal body"/>
    <property type="evidence" value="ECO:0000250"/>
    <property type="project" value="UniProtKB"/>
</dbReference>
<dbReference type="GO" id="GO:0005929">
    <property type="term" value="C:cilium"/>
    <property type="evidence" value="ECO:0000250"/>
    <property type="project" value="UniProtKB"/>
</dbReference>
<dbReference type="GO" id="GO:0005737">
    <property type="term" value="C:cytoplasm"/>
    <property type="evidence" value="ECO:0007669"/>
    <property type="project" value="UniProtKB-KW"/>
</dbReference>
<dbReference type="GO" id="GO:0031514">
    <property type="term" value="C:motile cilium"/>
    <property type="evidence" value="ECO:0007669"/>
    <property type="project" value="UniProtKB-KW"/>
</dbReference>
<dbReference type="GO" id="GO:0042073">
    <property type="term" value="P:intraciliary transport"/>
    <property type="evidence" value="ECO:0000250"/>
    <property type="project" value="UniProtKB"/>
</dbReference>
<dbReference type="GO" id="GO:0036158">
    <property type="term" value="P:outer dynein arm assembly"/>
    <property type="evidence" value="ECO:0000250"/>
    <property type="project" value="UniProtKB"/>
</dbReference>
<dbReference type="CDD" id="cd00200">
    <property type="entry name" value="WD40"/>
    <property type="match status" value="1"/>
</dbReference>
<dbReference type="FunFam" id="2.130.10.10:FF:000227">
    <property type="entry name" value="Dynein assembly factor with WDR repeat domains 1"/>
    <property type="match status" value="1"/>
</dbReference>
<dbReference type="FunFam" id="2.130.10.10:FF:000250">
    <property type="entry name" value="Dynein assembly factor with WDR repeat domains 1"/>
    <property type="match status" value="1"/>
</dbReference>
<dbReference type="FunFam" id="2.130.10.10:FF:001051">
    <property type="entry name" value="dynein assembly factor with WDR repeat domains 1"/>
    <property type="match status" value="1"/>
</dbReference>
<dbReference type="Gene3D" id="2.130.10.10">
    <property type="entry name" value="YVTN repeat-like/Quinoprotein amine dehydrogenase"/>
    <property type="match status" value="4"/>
</dbReference>
<dbReference type="InterPro" id="IPR020472">
    <property type="entry name" value="G-protein_beta_WD-40_rep"/>
</dbReference>
<dbReference type="InterPro" id="IPR015943">
    <property type="entry name" value="WD40/YVTN_repeat-like_dom_sf"/>
</dbReference>
<dbReference type="InterPro" id="IPR019775">
    <property type="entry name" value="WD40_repeat_CS"/>
</dbReference>
<dbReference type="InterPro" id="IPR036322">
    <property type="entry name" value="WD40_repeat_dom_sf"/>
</dbReference>
<dbReference type="InterPro" id="IPR001680">
    <property type="entry name" value="WD40_rpt"/>
</dbReference>
<dbReference type="PANTHER" id="PTHR22847:SF744">
    <property type="entry name" value="DYNEIN ASSEMBLY FACTOR WITH WD REPEATS 1"/>
    <property type="match status" value="1"/>
</dbReference>
<dbReference type="PANTHER" id="PTHR22847">
    <property type="entry name" value="WD40 REPEAT PROTEIN"/>
    <property type="match status" value="1"/>
</dbReference>
<dbReference type="Pfam" id="PF00400">
    <property type="entry name" value="WD40"/>
    <property type="match status" value="8"/>
</dbReference>
<dbReference type="PRINTS" id="PR00320">
    <property type="entry name" value="GPROTEINBRPT"/>
</dbReference>
<dbReference type="SMART" id="SM00320">
    <property type="entry name" value="WD40"/>
    <property type="match status" value="8"/>
</dbReference>
<dbReference type="SUPFAM" id="SSF50960">
    <property type="entry name" value="TolB, C-terminal domain"/>
    <property type="match status" value="1"/>
</dbReference>
<dbReference type="SUPFAM" id="SSF50978">
    <property type="entry name" value="WD40 repeat-like"/>
    <property type="match status" value="1"/>
</dbReference>
<dbReference type="PROSITE" id="PS00678">
    <property type="entry name" value="WD_REPEATS_1"/>
    <property type="match status" value="4"/>
</dbReference>
<dbReference type="PROSITE" id="PS50082">
    <property type="entry name" value="WD_REPEATS_2"/>
    <property type="match status" value="8"/>
</dbReference>
<dbReference type="PROSITE" id="PS50294">
    <property type="entry name" value="WD_REPEATS_REGION"/>
    <property type="match status" value="1"/>
</dbReference>
<organism>
    <name type="scientific">Macaca fascicularis</name>
    <name type="common">Crab-eating macaque</name>
    <name type="synonym">Cynomolgus monkey</name>
    <dbReference type="NCBI Taxonomy" id="9541"/>
    <lineage>
        <taxon>Eukaryota</taxon>
        <taxon>Metazoa</taxon>
        <taxon>Chordata</taxon>
        <taxon>Craniata</taxon>
        <taxon>Vertebrata</taxon>
        <taxon>Euteleostomi</taxon>
        <taxon>Mammalia</taxon>
        <taxon>Eutheria</taxon>
        <taxon>Euarchontoglires</taxon>
        <taxon>Primates</taxon>
        <taxon>Haplorrhini</taxon>
        <taxon>Catarrhini</taxon>
        <taxon>Cercopithecidae</taxon>
        <taxon>Cercopithecinae</taxon>
        <taxon>Macaca</taxon>
    </lineage>
</organism>
<comment type="function">
    <text evidence="2">Required for axonemal dynein assembly and ciliary motility in ciliated organs, including Kupffer's vesicle, during embryogenesis. Facilitates the onset of robust cilia motility during development.</text>
</comment>
<comment type="subunit">
    <text evidence="2">Interacts with IFT46.</text>
</comment>
<comment type="subcellular location">
    <subcellularLocation>
        <location evidence="1">Cytoplasm</location>
        <location evidence="1">Cytoskeleton</location>
        <location evidence="1">Flagellum basal body</location>
    </subcellularLocation>
    <subcellularLocation>
        <location evidence="1">Cytoplasm</location>
        <location evidence="1">Cytoskeleton</location>
        <location evidence="1">Flagellum axoneme</location>
    </subcellularLocation>
    <text evidence="1">Expression is concentrated at the flagellum basal body but is also detected along the length of the flagellum.</text>
</comment>
<comment type="similarity">
    <text evidence="3">Belongs to the WD repeat WDR69 family.</text>
</comment>
<evidence type="ECO:0000250" key="1">
    <source>
        <dbReference type="UniProtKB" id="Q3Y8L7"/>
    </source>
</evidence>
<evidence type="ECO:0000250" key="2">
    <source>
        <dbReference type="UniProtKB" id="Q8N136"/>
    </source>
</evidence>
<evidence type="ECO:0000305" key="3"/>
<proteinExistence type="evidence at transcript level"/>
<keyword id="KW-0966">Cell projection</keyword>
<keyword id="KW-0969">Cilium</keyword>
<keyword id="KW-0963">Cytoplasm</keyword>
<keyword id="KW-0206">Cytoskeleton</keyword>
<keyword id="KW-0282">Flagellum</keyword>
<keyword id="KW-1185">Reference proteome</keyword>
<keyword id="KW-0677">Repeat</keyword>
<keyword id="KW-0853">WD repeat</keyword>
<reference key="1">
    <citation type="submission" date="2005-06" db="EMBL/GenBank/DDBJ databases">
        <title>DNA sequences of macaque genes expressed in brain or testis and its evolutionary implications.</title>
        <authorList>
            <consortium name="International consortium for macaque cDNA sequencing and analysis"/>
        </authorList>
    </citation>
    <scope>NUCLEOTIDE SEQUENCE [LARGE SCALE MRNA]</scope>
    <source>
        <tissue>Testis</tissue>
    </source>
</reference>
<gene>
    <name type="primary">DAW1</name>
    <name type="synonym">WDR69</name>
    <name type="ORF">QtsA-12631</name>
</gene>
<protein>
    <recommendedName>
        <fullName>Dynein assembly factor with WD repeat domains 1</fullName>
    </recommendedName>
    <alternativeName>
        <fullName>Outer row dynein assembly protein 16 homolog</fullName>
    </alternativeName>
    <alternativeName>
        <fullName>WD repeat-containing protein 69</fullName>
    </alternativeName>
</protein>
<accession>Q4R8E7</accession>
<name>DAW1_MACFA</name>
<feature type="chain" id="PRO_0000242655" description="Dynein assembly factor with WD repeat domains 1">
    <location>
        <begin position="1"/>
        <end position="415"/>
    </location>
</feature>
<feature type="repeat" description="WD 1">
    <location>
        <begin position="90"/>
        <end position="129"/>
    </location>
</feature>
<feature type="repeat" description="WD 2">
    <location>
        <begin position="132"/>
        <end position="174"/>
    </location>
</feature>
<feature type="repeat" description="WD 3">
    <location>
        <begin position="175"/>
        <end position="214"/>
    </location>
</feature>
<feature type="repeat" description="WD 4">
    <location>
        <begin position="217"/>
        <end position="256"/>
    </location>
</feature>
<feature type="repeat" description="WD 5">
    <location>
        <begin position="259"/>
        <end position="298"/>
    </location>
</feature>
<feature type="repeat" description="WD 6">
    <location>
        <begin position="301"/>
        <end position="340"/>
    </location>
</feature>
<feature type="repeat" description="WD 7">
    <location>
        <begin position="343"/>
        <end position="384"/>
    </location>
</feature>
<feature type="repeat" description="WD 8">
    <location>
        <begin position="386"/>
        <end position="415"/>
    </location>
</feature>
<sequence length="415" mass="45740">MKLKSFLLRYYPPGIMLEYEKHGELKTKSIDLLDLGPSTDVSALVEEIQKAEPLITASRTEQVKLLIQRLQEKLGQHSNHTFYLFKVLKAHILPLTNVALNKSGSCFITGSYDRTCKLWDTASGEELNTLEGHRNVVYAIAFNNPYGDKTATGSFDKTCKLWSVETGKCYHTFRGHTAEIVCLSFNPQSTLVATGSMDTTAKLWNIQNGEEVCTLRGHSAEIISLSFNTSGDRIITGSFDHTVVVWDADTGGKVNILIGHCAEISSALFNWDCSLILTGSMDKTCMLWDATNGKCVATLTGHDDEILDSCFDYTGKLIATASADGTARIFSAATRKCIAKLEGHEGEISKISFNPQGNRLLTGSSDKTARIWDAQTGQCLQVLEGHTDEIFSCTFNYKGNIVITGSKDNTCRIWR</sequence>